<dbReference type="EC" id="4.1.1.-" evidence="4"/>
<dbReference type="EMBL" id="KN818402">
    <property type="protein sequence ID" value="KIL56734.1"/>
    <property type="molecule type" value="Genomic_DNA"/>
</dbReference>
<dbReference type="SMR" id="A0A0C2SRU0"/>
<dbReference type="STRING" id="946122.A0A0C2SRU0"/>
<dbReference type="HOGENOM" id="CLU_033450_0_0_1"/>
<dbReference type="InParanoid" id="A0A0C2SRU0"/>
<dbReference type="OrthoDB" id="5973539at2759"/>
<dbReference type="BioCyc" id="MetaCyc:MONOMER-21263"/>
<dbReference type="Proteomes" id="UP000054549">
    <property type="component" value="Unassembled WGS sequence"/>
</dbReference>
<dbReference type="GO" id="GO:0005739">
    <property type="term" value="C:mitochondrion"/>
    <property type="evidence" value="ECO:0007669"/>
    <property type="project" value="TreeGrafter"/>
</dbReference>
<dbReference type="GO" id="GO:0004609">
    <property type="term" value="F:phosphatidylserine decarboxylase activity"/>
    <property type="evidence" value="ECO:0007669"/>
    <property type="project" value="InterPro"/>
</dbReference>
<dbReference type="GO" id="GO:0006646">
    <property type="term" value="P:phosphatidylethanolamine biosynthetic process"/>
    <property type="evidence" value="ECO:0007669"/>
    <property type="project" value="TreeGrafter"/>
</dbReference>
<dbReference type="InterPro" id="IPR003817">
    <property type="entry name" value="PS_Dcarbxylase"/>
</dbReference>
<dbReference type="InterPro" id="IPR022237">
    <property type="entry name" value="PsiD-like"/>
</dbReference>
<dbReference type="PANTHER" id="PTHR10067">
    <property type="entry name" value="PHOSPHATIDYLSERINE DECARBOXYLASE"/>
    <property type="match status" value="1"/>
</dbReference>
<dbReference type="PANTHER" id="PTHR10067:SF9">
    <property type="entry name" value="PHOSPHATIDYLSERINE DECARBOXYLASE FAMILY PROTEIN (AFU_ORTHOLOGUE AFUA_7G01730)"/>
    <property type="match status" value="1"/>
</dbReference>
<dbReference type="Pfam" id="PF02666">
    <property type="entry name" value="PS_Dcarbxylase"/>
    <property type="match status" value="1"/>
</dbReference>
<dbReference type="Pfam" id="PF12588">
    <property type="entry name" value="PSDC"/>
    <property type="match status" value="1"/>
</dbReference>
<gene>
    <name evidence="2" type="primary">iboD</name>
    <name type="ORF">M378DRAFT_172432</name>
</gene>
<feature type="chain" id="PRO_0000454920" description="Decarboxylase iboD">
    <location>
        <begin position="1"/>
        <end position="350"/>
    </location>
</feature>
<keyword id="KW-0210">Decarboxylase</keyword>
<keyword id="KW-0456">Lyase</keyword>
<keyword id="KW-1185">Reference proteome</keyword>
<reference key="1">
    <citation type="journal article" date="2015" name="Nat. Genet.">
        <title>Convergent losses of decay mechanisms and rapid turnover of symbiosis genes in mycorrhizal mutualists.</title>
        <authorList>
            <consortium name="Mycorrhizal Genomics Initiative Consortium"/>
            <person name="Kohler A."/>
            <person name="Kuo A."/>
            <person name="Nagy L.G."/>
            <person name="Morin E."/>
            <person name="Barry K.W."/>
            <person name="Buscot F."/>
            <person name="Canbaeck B."/>
            <person name="Choi C."/>
            <person name="Cichocki N."/>
            <person name="Clum A."/>
            <person name="Colpaert J."/>
            <person name="Copeland A."/>
            <person name="Costa M.D."/>
            <person name="Dore J."/>
            <person name="Floudas D."/>
            <person name="Gay G."/>
            <person name="Girlanda M."/>
            <person name="Henrissat B."/>
            <person name="Herrmann S."/>
            <person name="Hess J."/>
            <person name="Hoegberg N."/>
            <person name="Johansson T."/>
            <person name="Khouja H.R."/>
            <person name="LaButti K."/>
            <person name="Lahrmann U."/>
            <person name="Levasseur A."/>
            <person name="Lindquist E.A."/>
            <person name="Lipzen A."/>
            <person name="Marmeisse R."/>
            <person name="Martino E."/>
            <person name="Murat C."/>
            <person name="Ngan C.Y."/>
            <person name="Nehls U."/>
            <person name="Plett J.M."/>
            <person name="Pringle A."/>
            <person name="Ohm R.A."/>
            <person name="Perotto S."/>
            <person name="Peter M."/>
            <person name="Riley R."/>
            <person name="Rineau F."/>
            <person name="Ruytinx J."/>
            <person name="Salamov A."/>
            <person name="Shah F."/>
            <person name="Sun H."/>
            <person name="Tarkka M."/>
            <person name="Tritt A."/>
            <person name="Veneault-Fourrey C."/>
            <person name="Zuccaro A."/>
            <person name="Tunlid A."/>
            <person name="Grigoriev I.V."/>
            <person name="Hibbett D.S."/>
            <person name="Martin F."/>
        </authorList>
    </citation>
    <scope>NUCLEOTIDE SEQUENCE [LARGE SCALE GENOMIC DNA]</scope>
    <source>
        <strain>Koide BX008</strain>
    </source>
</reference>
<reference key="2">
    <citation type="journal article" date="2020" name="Angew. Chem. Int. Ed.">
        <title>Ibotenic acid biosynthesis in the fly agaric is initiated by glutamate hydroxylation.</title>
        <authorList>
            <person name="Obermaier S."/>
            <person name="Mueller M."/>
        </authorList>
    </citation>
    <scope>FUNCTION</scope>
    <scope>INDUCTION</scope>
    <scope>PATHWAY</scope>
</reference>
<evidence type="ECO:0000269" key="1">
    <source>
    </source>
</evidence>
<evidence type="ECO:0000303" key="2">
    <source>
    </source>
</evidence>
<evidence type="ECO:0000305" key="3"/>
<evidence type="ECO:0000305" key="4">
    <source>
    </source>
</evidence>
<proteinExistence type="evidence at transcript level"/>
<comment type="function">
    <text evidence="1 4">Decarboxylase; part of the gene cluster that mediates the biosynthesis of the psychoactive metabolites ibotenic acid and muscimol (PubMed:32233056). The first committed step is glutamate hydroxylation by the 2-oxoglutarate-dependent dioxygenase iboH, and the last step is decarboxylation of ibotenic acid to muscimol by the decarboxylase iboD (PubMed:32233056). The order of the intermediate reactions is somewhat ambiguous (Probable). IboA likely activates the carboxylic acid at position 5 to introduce an amide bond, and the flavin monooxygenase iboF generates the N-O bond (Probable). There are several options for the latter step (Probable). One option is that iboF directly hydroxylates the amide nitrogen formed by iboA to produce a hydroxamic acid species (Probable). Another option is that iboF hydroxylates an external N-containing compound, whose resulting N-O bond is subsequently introduced into the hydroxyglutamate scaffold (Probable). The paralogous PLP-dependent cystathionine gamma-synthase-like enzymes iboG1 and iboG2 are likely involved in substitution of the OH group at position 3 by the O-N moiety (Probable). The first cyclic intermediate is most probably tricholomic acid which is likely desaturated to ibotenic acid by the cytochrome P450 monooxygenase iboC (Probable).</text>
</comment>
<comment type="pathway">
    <text evidence="4">Secondary metabolite biosynthesis.</text>
</comment>
<comment type="induction">
    <text evidence="1">Expression is highly induced during artificial growth in symbiosis with Populus, which is close to its natural condition.</text>
</comment>
<comment type="similarity">
    <text evidence="3">Belongs to the phosphatidylserine decarboxylase family.</text>
</comment>
<sequence length="350" mass="39046">MIDRLIVAPPEFQIYRDEHGNRLPRPFGLPICLLFTYLCNTSAGYDLFRKPAFNTAMKTLLDSWGLYLTTKDSAKLLTDCEGGWFSEEALQEFESDSRGKFEETYVCPDPDAVNRGFSSWDAFFTREVQPNARPVEAPDDKSVIHNPCESYLHCIARDVKCHDLFWLKGNIYSLYDMLNRDHKLAKQFVGGTIYQGFLSPVDYHRWRSPVDGTIKKTEIVAGTYYAALPDAGAPEGNQYQAAGDLRGALKRSQTWLAMVAARALVYIEADNPDIGLVCFIAVGMVEVSTCEVTVKRGQKVSAGSELGMFHFGGSSFVLVFGPQACITFPEDVVLGKHVKLNSILARVHKA</sequence>
<protein>
    <recommendedName>
        <fullName evidence="2">Decarboxylase iboD</fullName>
        <ecNumber evidence="4">4.1.1.-</ecNumber>
    </recommendedName>
    <alternativeName>
        <fullName evidence="2">Ibotenic acid biosynthesis cluster protein D</fullName>
    </alternativeName>
</protein>
<accession>A0A0C2SRU0</accession>
<name>IBOD_AMAMK</name>
<organism>
    <name type="scientific">Amanita muscaria (strain Koide BX008)</name>
    <dbReference type="NCBI Taxonomy" id="946122"/>
    <lineage>
        <taxon>Eukaryota</taxon>
        <taxon>Fungi</taxon>
        <taxon>Dikarya</taxon>
        <taxon>Basidiomycota</taxon>
        <taxon>Agaricomycotina</taxon>
        <taxon>Agaricomycetes</taxon>
        <taxon>Agaricomycetidae</taxon>
        <taxon>Agaricales</taxon>
        <taxon>Pluteineae</taxon>
        <taxon>Amanitaceae</taxon>
        <taxon>Amanita</taxon>
    </lineage>
</organism>